<feature type="chain" id="PRO_0000235394" description="Holliday junction branch migration complex subunit RuvB">
    <location>
        <begin position="1"/>
        <end position="353"/>
    </location>
</feature>
<feature type="region of interest" description="Large ATPase domain (RuvB-L)" evidence="1">
    <location>
        <begin position="4"/>
        <end position="185"/>
    </location>
</feature>
<feature type="region of interest" description="Small ATPAse domain (RuvB-S)" evidence="1">
    <location>
        <begin position="186"/>
        <end position="256"/>
    </location>
</feature>
<feature type="region of interest" description="Head domain (RuvB-H)" evidence="1">
    <location>
        <begin position="259"/>
        <end position="353"/>
    </location>
</feature>
<feature type="binding site" evidence="1">
    <location>
        <position position="24"/>
    </location>
    <ligand>
        <name>ATP</name>
        <dbReference type="ChEBI" id="CHEBI:30616"/>
    </ligand>
</feature>
<feature type="binding site" evidence="1">
    <location>
        <position position="25"/>
    </location>
    <ligand>
        <name>ATP</name>
        <dbReference type="ChEBI" id="CHEBI:30616"/>
    </ligand>
</feature>
<feature type="binding site" evidence="1">
    <location>
        <position position="66"/>
    </location>
    <ligand>
        <name>ATP</name>
        <dbReference type="ChEBI" id="CHEBI:30616"/>
    </ligand>
</feature>
<feature type="binding site" evidence="1">
    <location>
        <position position="69"/>
    </location>
    <ligand>
        <name>ATP</name>
        <dbReference type="ChEBI" id="CHEBI:30616"/>
    </ligand>
</feature>
<feature type="binding site" evidence="1">
    <location>
        <position position="70"/>
    </location>
    <ligand>
        <name>ATP</name>
        <dbReference type="ChEBI" id="CHEBI:30616"/>
    </ligand>
</feature>
<feature type="binding site" evidence="1">
    <location>
        <position position="70"/>
    </location>
    <ligand>
        <name>Mg(2+)</name>
        <dbReference type="ChEBI" id="CHEBI:18420"/>
    </ligand>
</feature>
<feature type="binding site" evidence="1">
    <location>
        <position position="71"/>
    </location>
    <ligand>
        <name>ATP</name>
        <dbReference type="ChEBI" id="CHEBI:30616"/>
    </ligand>
</feature>
<feature type="binding site" evidence="1">
    <location>
        <begin position="132"/>
        <end position="134"/>
    </location>
    <ligand>
        <name>ATP</name>
        <dbReference type="ChEBI" id="CHEBI:30616"/>
    </ligand>
</feature>
<feature type="binding site" evidence="1">
    <location>
        <position position="175"/>
    </location>
    <ligand>
        <name>ATP</name>
        <dbReference type="ChEBI" id="CHEBI:30616"/>
    </ligand>
</feature>
<feature type="binding site" evidence="1">
    <location>
        <position position="185"/>
    </location>
    <ligand>
        <name>ATP</name>
        <dbReference type="ChEBI" id="CHEBI:30616"/>
    </ligand>
</feature>
<feature type="binding site" evidence="1">
    <location>
        <position position="222"/>
    </location>
    <ligand>
        <name>ATP</name>
        <dbReference type="ChEBI" id="CHEBI:30616"/>
    </ligand>
</feature>
<feature type="binding site" evidence="1">
    <location>
        <position position="295"/>
    </location>
    <ligand>
        <name>DNA</name>
        <dbReference type="ChEBI" id="CHEBI:16991"/>
    </ligand>
</feature>
<feature type="binding site" evidence="1">
    <location>
        <position position="314"/>
    </location>
    <ligand>
        <name>DNA</name>
        <dbReference type="ChEBI" id="CHEBI:16991"/>
    </ligand>
</feature>
<feature type="binding site" evidence="1">
    <location>
        <position position="319"/>
    </location>
    <ligand>
        <name>DNA</name>
        <dbReference type="ChEBI" id="CHEBI:16991"/>
    </ligand>
</feature>
<protein>
    <recommendedName>
        <fullName evidence="1">Holliday junction branch migration complex subunit RuvB</fullName>
        <ecNumber evidence="1">3.6.4.-</ecNumber>
    </recommendedName>
</protein>
<evidence type="ECO:0000255" key="1">
    <source>
        <dbReference type="HAMAP-Rule" id="MF_00016"/>
    </source>
</evidence>
<name>RUVB_PSEU2</name>
<gene>
    <name evidence="1" type="primary">ruvB</name>
    <name type="ordered locus">Psyr_1410</name>
</gene>
<accession>Q4ZWL1</accession>
<keyword id="KW-0067">ATP-binding</keyword>
<keyword id="KW-0963">Cytoplasm</keyword>
<keyword id="KW-0227">DNA damage</keyword>
<keyword id="KW-0233">DNA recombination</keyword>
<keyword id="KW-0234">DNA repair</keyword>
<keyword id="KW-0238">DNA-binding</keyword>
<keyword id="KW-0378">Hydrolase</keyword>
<keyword id="KW-0547">Nucleotide-binding</keyword>
<proteinExistence type="inferred from homology"/>
<organism>
    <name type="scientific">Pseudomonas syringae pv. syringae (strain B728a)</name>
    <dbReference type="NCBI Taxonomy" id="205918"/>
    <lineage>
        <taxon>Bacteria</taxon>
        <taxon>Pseudomonadati</taxon>
        <taxon>Pseudomonadota</taxon>
        <taxon>Gammaproteobacteria</taxon>
        <taxon>Pseudomonadales</taxon>
        <taxon>Pseudomonadaceae</taxon>
        <taxon>Pseudomonas</taxon>
        <taxon>Pseudomonas syringae</taxon>
    </lineage>
</organism>
<sequence length="353" mass="39115">MIDADRLITATGGRDRDEQMDRAIRPLSLADYIGQPTVREQMELFIQAARGRSEALDHTLIFGPPGLGKTTLANIIAQEMGVSIKSTSGPVLERPGDLAAILTNLEPNDVLFIDEIHRLSPIVEEVLYPAMEDFQLDIMIGEGPAARSIKLDLPPFTLVGATTRAGMLTNPLRDRFGIVQRLEFYNIADLSTIVSRSAGILGLVIEPQGAFEIARRARGTPRIANRLLRRVRDFAEVRGNGQITRQTADKALNLLDVDEHGFDHQDRRLLLTMIEKFDGGPVGVDSLAAAISEERHTIEDVLEPYLIQQGYIMRTPRGRVVTRHAYLHFGLNIPSRMGEIPVPDDFGDEPVDL</sequence>
<reference key="1">
    <citation type="journal article" date="2005" name="Proc. Natl. Acad. Sci. U.S.A.">
        <title>Comparison of the complete genome sequences of Pseudomonas syringae pv. syringae B728a and pv. tomato DC3000.</title>
        <authorList>
            <person name="Feil H."/>
            <person name="Feil W.S."/>
            <person name="Chain P."/>
            <person name="Larimer F."/>
            <person name="Dibartolo G."/>
            <person name="Copeland A."/>
            <person name="Lykidis A."/>
            <person name="Trong S."/>
            <person name="Nolan M."/>
            <person name="Goltsman E."/>
            <person name="Thiel J."/>
            <person name="Malfatti S."/>
            <person name="Loper J.E."/>
            <person name="Lapidus A."/>
            <person name="Detter J.C."/>
            <person name="Land M."/>
            <person name="Richardson P.M."/>
            <person name="Kyrpides N.C."/>
            <person name="Ivanova N."/>
            <person name="Lindow S.E."/>
        </authorList>
    </citation>
    <scope>NUCLEOTIDE SEQUENCE [LARGE SCALE GENOMIC DNA]</scope>
    <source>
        <strain>B728a</strain>
    </source>
</reference>
<dbReference type="EC" id="3.6.4.-" evidence="1"/>
<dbReference type="EMBL" id="CP000075">
    <property type="protein sequence ID" value="AAY36461.1"/>
    <property type="molecule type" value="Genomic_DNA"/>
</dbReference>
<dbReference type="RefSeq" id="WP_003409396.1">
    <property type="nucleotide sequence ID" value="NC_007005.1"/>
</dbReference>
<dbReference type="RefSeq" id="YP_234499.1">
    <property type="nucleotide sequence ID" value="NC_007005.1"/>
</dbReference>
<dbReference type="SMR" id="Q4ZWL1"/>
<dbReference type="STRING" id="205918.Psyr_1410"/>
<dbReference type="KEGG" id="psb:Psyr_1410"/>
<dbReference type="PATRIC" id="fig|205918.7.peg.1446"/>
<dbReference type="eggNOG" id="COG2255">
    <property type="taxonomic scope" value="Bacteria"/>
</dbReference>
<dbReference type="HOGENOM" id="CLU_055599_1_0_6"/>
<dbReference type="OrthoDB" id="9804478at2"/>
<dbReference type="Proteomes" id="UP000000426">
    <property type="component" value="Chromosome"/>
</dbReference>
<dbReference type="GO" id="GO:0005737">
    <property type="term" value="C:cytoplasm"/>
    <property type="evidence" value="ECO:0007669"/>
    <property type="project" value="UniProtKB-SubCell"/>
</dbReference>
<dbReference type="GO" id="GO:0048476">
    <property type="term" value="C:Holliday junction resolvase complex"/>
    <property type="evidence" value="ECO:0007669"/>
    <property type="project" value="UniProtKB-UniRule"/>
</dbReference>
<dbReference type="GO" id="GO:0005524">
    <property type="term" value="F:ATP binding"/>
    <property type="evidence" value="ECO:0007669"/>
    <property type="project" value="UniProtKB-UniRule"/>
</dbReference>
<dbReference type="GO" id="GO:0016887">
    <property type="term" value="F:ATP hydrolysis activity"/>
    <property type="evidence" value="ECO:0007669"/>
    <property type="project" value="InterPro"/>
</dbReference>
<dbReference type="GO" id="GO:0000400">
    <property type="term" value="F:four-way junction DNA binding"/>
    <property type="evidence" value="ECO:0007669"/>
    <property type="project" value="UniProtKB-UniRule"/>
</dbReference>
<dbReference type="GO" id="GO:0009378">
    <property type="term" value="F:four-way junction helicase activity"/>
    <property type="evidence" value="ECO:0007669"/>
    <property type="project" value="InterPro"/>
</dbReference>
<dbReference type="GO" id="GO:0006310">
    <property type="term" value="P:DNA recombination"/>
    <property type="evidence" value="ECO:0007669"/>
    <property type="project" value="UniProtKB-UniRule"/>
</dbReference>
<dbReference type="GO" id="GO:0006281">
    <property type="term" value="P:DNA repair"/>
    <property type="evidence" value="ECO:0007669"/>
    <property type="project" value="UniProtKB-UniRule"/>
</dbReference>
<dbReference type="CDD" id="cd00009">
    <property type="entry name" value="AAA"/>
    <property type="match status" value="1"/>
</dbReference>
<dbReference type="FunFam" id="1.10.10.10:FF:000086">
    <property type="entry name" value="Holliday junction ATP-dependent DNA helicase RuvB"/>
    <property type="match status" value="1"/>
</dbReference>
<dbReference type="FunFam" id="1.10.8.60:FF:000023">
    <property type="entry name" value="Holliday junction ATP-dependent DNA helicase RuvB"/>
    <property type="match status" value="1"/>
</dbReference>
<dbReference type="FunFam" id="3.40.50.300:FF:000073">
    <property type="entry name" value="Holliday junction ATP-dependent DNA helicase RuvB"/>
    <property type="match status" value="1"/>
</dbReference>
<dbReference type="Gene3D" id="1.10.8.60">
    <property type="match status" value="1"/>
</dbReference>
<dbReference type="Gene3D" id="3.40.50.300">
    <property type="entry name" value="P-loop containing nucleotide triphosphate hydrolases"/>
    <property type="match status" value="1"/>
</dbReference>
<dbReference type="Gene3D" id="1.10.10.10">
    <property type="entry name" value="Winged helix-like DNA-binding domain superfamily/Winged helix DNA-binding domain"/>
    <property type="match status" value="1"/>
</dbReference>
<dbReference type="HAMAP" id="MF_00016">
    <property type="entry name" value="DNA_HJ_migration_RuvB"/>
    <property type="match status" value="1"/>
</dbReference>
<dbReference type="InterPro" id="IPR003593">
    <property type="entry name" value="AAA+_ATPase"/>
</dbReference>
<dbReference type="InterPro" id="IPR041445">
    <property type="entry name" value="AAA_lid_4"/>
</dbReference>
<dbReference type="InterPro" id="IPR004605">
    <property type="entry name" value="DNA_helicase_Holl-junc_RuvB"/>
</dbReference>
<dbReference type="InterPro" id="IPR027417">
    <property type="entry name" value="P-loop_NTPase"/>
</dbReference>
<dbReference type="InterPro" id="IPR008824">
    <property type="entry name" value="RuvB-like_N"/>
</dbReference>
<dbReference type="InterPro" id="IPR008823">
    <property type="entry name" value="RuvB_C"/>
</dbReference>
<dbReference type="InterPro" id="IPR036388">
    <property type="entry name" value="WH-like_DNA-bd_sf"/>
</dbReference>
<dbReference type="InterPro" id="IPR036390">
    <property type="entry name" value="WH_DNA-bd_sf"/>
</dbReference>
<dbReference type="NCBIfam" id="NF000868">
    <property type="entry name" value="PRK00080.1"/>
    <property type="match status" value="1"/>
</dbReference>
<dbReference type="NCBIfam" id="TIGR00635">
    <property type="entry name" value="ruvB"/>
    <property type="match status" value="1"/>
</dbReference>
<dbReference type="PANTHER" id="PTHR42848">
    <property type="match status" value="1"/>
</dbReference>
<dbReference type="PANTHER" id="PTHR42848:SF1">
    <property type="entry name" value="HOLLIDAY JUNCTION BRANCH MIGRATION COMPLEX SUBUNIT RUVB"/>
    <property type="match status" value="1"/>
</dbReference>
<dbReference type="Pfam" id="PF17864">
    <property type="entry name" value="AAA_lid_4"/>
    <property type="match status" value="1"/>
</dbReference>
<dbReference type="Pfam" id="PF05491">
    <property type="entry name" value="RuvB_C"/>
    <property type="match status" value="1"/>
</dbReference>
<dbReference type="Pfam" id="PF05496">
    <property type="entry name" value="RuvB_N"/>
    <property type="match status" value="1"/>
</dbReference>
<dbReference type="SMART" id="SM00382">
    <property type="entry name" value="AAA"/>
    <property type="match status" value="1"/>
</dbReference>
<dbReference type="SUPFAM" id="SSF52540">
    <property type="entry name" value="P-loop containing nucleoside triphosphate hydrolases"/>
    <property type="match status" value="1"/>
</dbReference>
<dbReference type="SUPFAM" id="SSF46785">
    <property type="entry name" value="Winged helix' DNA-binding domain"/>
    <property type="match status" value="1"/>
</dbReference>
<comment type="function">
    <text evidence="1">The RuvA-RuvB-RuvC complex processes Holliday junction (HJ) DNA during genetic recombination and DNA repair, while the RuvA-RuvB complex plays an important role in the rescue of blocked DNA replication forks via replication fork reversal (RFR). RuvA specifically binds to HJ cruciform DNA, conferring on it an open structure. The RuvB hexamer acts as an ATP-dependent pump, pulling dsDNA into and through the RuvAB complex. RuvB forms 2 homohexamers on either side of HJ DNA bound by 1 or 2 RuvA tetramers; 4 subunits per hexamer contact DNA at a time. Coordinated motions by a converter formed by DNA-disengaged RuvB subunits stimulates ATP hydrolysis and nucleotide exchange. Immobilization of the converter enables RuvB to convert the ATP-contained energy into a lever motion, pulling 2 nucleotides of DNA out of the RuvA tetramer per ATP hydrolyzed, thus driving DNA branch migration. The RuvB motors rotate together with the DNA substrate, which together with the progressing nucleotide cycle form the mechanistic basis for DNA recombination by continuous HJ branch migration. Branch migration allows RuvC to scan DNA until it finds its consensus sequence, where it cleaves and resolves cruciform DNA.</text>
</comment>
<comment type="catalytic activity">
    <reaction evidence="1">
        <text>ATP + H2O = ADP + phosphate + H(+)</text>
        <dbReference type="Rhea" id="RHEA:13065"/>
        <dbReference type="ChEBI" id="CHEBI:15377"/>
        <dbReference type="ChEBI" id="CHEBI:15378"/>
        <dbReference type="ChEBI" id="CHEBI:30616"/>
        <dbReference type="ChEBI" id="CHEBI:43474"/>
        <dbReference type="ChEBI" id="CHEBI:456216"/>
    </reaction>
</comment>
<comment type="subunit">
    <text evidence="1">Homohexamer. Forms an RuvA(8)-RuvB(12)-Holliday junction (HJ) complex. HJ DNA is sandwiched between 2 RuvA tetramers; dsDNA enters through RuvA and exits via RuvB. An RuvB hexamer assembles on each DNA strand where it exits the tetramer. Each RuvB hexamer is contacted by two RuvA subunits (via domain III) on 2 adjacent RuvB subunits; this complex drives branch migration. In the full resolvosome a probable DNA-RuvA(4)-RuvB(12)-RuvC(2) complex forms which resolves the HJ.</text>
</comment>
<comment type="subcellular location">
    <subcellularLocation>
        <location evidence="1">Cytoplasm</location>
    </subcellularLocation>
</comment>
<comment type="domain">
    <text evidence="1">Has 3 domains, the large (RuvB-L) and small ATPase (RuvB-S) domains and the C-terminal head (RuvB-H) domain. The head domain binds DNA, while the ATPase domains jointly bind ATP, ADP or are empty depending on the state of the subunit in the translocation cycle. During a single DNA translocation step the structure of each domain remains the same, but their relative positions change.</text>
</comment>
<comment type="similarity">
    <text evidence="1">Belongs to the RuvB family.</text>
</comment>